<evidence type="ECO:0000250" key="1"/>
<evidence type="ECO:0000250" key="2">
    <source>
        <dbReference type="UniProtKB" id="G3I8R9"/>
    </source>
</evidence>
<evidence type="ECO:0000250" key="3">
    <source>
        <dbReference type="UniProtKB" id="P06761"/>
    </source>
</evidence>
<evidence type="ECO:0000250" key="4">
    <source>
        <dbReference type="UniProtKB" id="P0DMV8"/>
    </source>
</evidence>
<evidence type="ECO:0000250" key="5">
    <source>
        <dbReference type="UniProtKB" id="P11021"/>
    </source>
</evidence>
<evidence type="ECO:0000250" key="6">
    <source>
        <dbReference type="UniProtKB" id="P20029"/>
    </source>
</evidence>
<evidence type="ECO:0000255" key="7">
    <source>
        <dbReference type="PROSITE-ProRule" id="PRU10138"/>
    </source>
</evidence>
<evidence type="ECO:0000256" key="8">
    <source>
        <dbReference type="SAM" id="MobiDB-lite"/>
    </source>
</evidence>
<evidence type="ECO:0000305" key="9"/>
<gene>
    <name evidence="5" type="primary">HSPA5</name>
    <name evidence="5" type="synonym">GRP78</name>
</gene>
<sequence length="654" mass="72315">MKLSLVAAMLLLLSAARAEEEDKKEDVGTVVGIDLGTTYSCVGVFKNGRVEIIANDQGNRITPPYVAFTPEGERLIGDAAKNQLTSNPENTVFDAKRLIGRTWNDPSVQQDIKFLPFKVVEKKTKPYIQVDIGGGQTKTFAPEEISAMVLTKMKETAEAYLGKKVTHAVVTVPAYFNDAQRQATKDAGTIAGLNVMRIINEPTAAAIAYGLDKREGEKNILVFDLGGGTFDVSLLTIDNGVFEVVATNGDTHLGGEDFDQRVMEHFIKLYKKKTGKDVRKDNRAVQKLRREVEKAKRALSSQHQARIEIESFYEGEDFSETLTRAKFEELNMDLFRSTMKPVQKVLEDSDLKKSDIDEIVLVGGSTRIPKIQQLVKEFFNGKEPSRGINPDEAVAYGAAVQAGVLSGDQDTGDLALLDVCPLTLGIETVGGVMTKLIPRNTVVPTKKSQIFSTASDNQPTVTIKVYEGERPLTKDNHLLGTFDLTGIPPAPRGVPQIEVTFEIDVNGILRVTAEDKGTGNKNKITITNDQNRLTPEEIERMVNDAEKFAEEDKKLKERIDTRNELESYAYSLKNQIGDKEKLGGKLSSEDKETMEKAVEEKIEWLESHQDADIEDFKAKKKELEEIVQPIISKLYGSAGPPPTGEEDTAEKDEL</sequence>
<keyword id="KW-0007">Acetylation</keyword>
<keyword id="KW-0067">ATP-binding</keyword>
<keyword id="KW-0143">Chaperone</keyword>
<keyword id="KW-0963">Cytoplasm</keyword>
<keyword id="KW-0256">Endoplasmic reticulum</keyword>
<keyword id="KW-0378">Hydrolase</keyword>
<keyword id="KW-1017">Isopeptide bond</keyword>
<keyword id="KW-0488">Methylation</keyword>
<keyword id="KW-0944">Nitration</keyword>
<keyword id="KW-0547">Nucleotide-binding</keyword>
<keyword id="KW-0597">Phosphoprotein</keyword>
<keyword id="KW-1185">Reference proteome</keyword>
<keyword id="KW-0732">Signal</keyword>
<keyword id="KW-0832">Ubl conjugation</keyword>
<comment type="function">
    <text evidence="2 5 6">Endoplasmic reticulum chaperone that plays a key role in protein folding and quality control in the endoplasmic reticulum lumen (By similarity). Involved in the correct folding of proteins and degradation of misfolded proteins via its interaction with DNAJC10/ERdj5, probably to facilitate the release of DNAJC10/ERdj5 from its substrate (By similarity). Acts as a key repressor of the EIF2AK3/PERK and ERN1/IRE1-mediated unfolded protein response (UPR). In the unstressed endoplasmic reticulum, recruited by DNAJB9/ERdj4 to the luminal region of ERN1/IRE1, leading to disrupt the dimerization of ERN1/IRE1, thereby inactivating ERN1/IRE1. Also binds and inactivates EIF2AK3/PERK in unstressed cells. Accumulation of misfolded protein in the endoplasmic reticulum causes release of HSPA5/BiP from ERN1/IRE1 and EIF2AK3/PERK, allowing their homodimerization and subsequent activation (By similarity). Plays an auxiliary role in post-translational transport of small presecretory proteins across endoplasmic reticulum (ER). May function as an allosteric modulator for SEC61 channel-forming translocon complex, likely cooperating with SEC62 to enable the productive insertion of these precursors into SEC61 channel. Appears to specifically regulate translocation of precursors having inhibitory residues in their mature region that weaken channel gating. May also play a role in apoptosis and cell proliferation (By similarity).</text>
</comment>
<comment type="catalytic activity">
    <reaction evidence="2">
        <text>ATP + H2O = ADP + phosphate + H(+)</text>
        <dbReference type="Rhea" id="RHEA:13065"/>
        <dbReference type="ChEBI" id="CHEBI:15377"/>
        <dbReference type="ChEBI" id="CHEBI:15378"/>
        <dbReference type="ChEBI" id="CHEBI:30616"/>
        <dbReference type="ChEBI" id="CHEBI:43474"/>
        <dbReference type="ChEBI" id="CHEBI:456216"/>
        <dbReference type="EC" id="3.6.4.10"/>
    </reaction>
</comment>
<comment type="activity regulation">
    <text evidence="2 5">The chaperone activity is regulated by ATP-induced allosteric coupling of the nucleotide-binding (NBD) and substrate-binding (SBD) domains (By similarity). In the ADP-bound and nucleotide-free (apo) states, the two domains have little interaction (By similarity). In contrast, in the ATP-bound state the two domains are tightly coupled, which results in drastically accelerated kinetics in both binding and release of polypeptide substrates (By similarity). J domain-containing co-chaperones (DNAJB9/ERdj4 or DNAJC10/ERdj5) stimulate the ATPase activity and are required for efficient substrate recognition by HSPA5/BiP. Homooligomerization inactivates participating HSPA5/BiP protomers and probably act as reservoirs to store HSPA5/BiP molecules when they are not needed by the cell (By similarity).</text>
</comment>
<comment type="subunit">
    <text evidence="2 5 6">Monomer and homooligomer; homooligomerization via the interdomain linker inactivates the chaperone activity and acts as a storage of HSPA5/BiP molecules (By similarity). Interacts with DNAJC1 (via J domain). Component of an EIF2 complex at least composed of CELF1/CUGBP1, CALR, CALR3, EIF2S1, EIF2S2, HSP90B1 and HSPA5. Part of a large chaperone multiprotein complex comprising DNAJB11, HSP90B1, HSPA5, HYOU, PDIA2, PDIA4, PDIA6, PPIB, SDF2L1, UGGT1 and very small amounts of ERP29, but not, or at very low levels, CALR nor CANX (By similarity). Interacts with TMEM132A and TRIM21 (By similarity). May form a complex with ERLEC1, OS9, SEL1L and SYVN1 (By similarity). Interacts with DNAJC10. Interacts with DNAJB9/ERdj4; leading to recruit HSPA5/BiP to ERN1/IRE1 (By similarity). Interacts with ERN1/IRE1 (via luminal domain); the interaction takes place following interaction with DNAJB9/ERdj4 and leads to inactivate ERN1/IRE1, the interaction also competitively inhibits ERN1 interaction with MANF (By similarity). Interacts directly with MANF (via SAP domain); the interaction inhibits ATP binding to HSPA5/BiP and subsequent nucleotide exchange (By similarity). Interacts with EIF2AK3/PERK (via luminal domain); interaction leads to inactivate EIF2AK3/PERK (By similarity). Interacts with MX1 (By similarity). Interacts with METTL23 (By similarity). Interacts with CEMIP; the interaction induces calcium leakage from the endoplasmic reticulum and cell migration (By similarity). Interacts with PCSK4 form; the interaction takes place in the endoplasmic reticulum (By similarity). Interacts with CIPC (By similarity). Interacts with CCDC88B (via C-terminus); the interaction opposes ERN1-mediated JNK activation, protecting against apoptosis (By similarity). Interacts with INPP5K; necessary for INPP5K localization at the endoplasmic reticulum (By similarity). Interacts with MANF; the interaction is direct (By similarity). Interacts with LOXL2; leading to activate the ERN1/IRE1-XBP1 pathway of the unfolded protein response (By similarity). Interacts with CLU under stressed condition; interaction increases CLU protein stability; facilitates its retrotranslocation and redistribution to the mitochondria; cooperatively suppress stress-induced apoptosis by stabilizing mitochondrial membrane integrity (By similarity). Interacts with CCDC47 (By similarity). Interacts with CLN3 (By similarity). Interacts with ELAPOR1; may regulate the function of HSPA5 in apoptosis and cell proliferation. Interacts with CASP7 (By similarity). Interacts with ILDR2; the interaction stabilizes ILDR2 expression (By similarity). Interacts with ADAM7 (By similarity).</text>
</comment>
<comment type="subcellular location">
    <subcellularLocation>
        <location evidence="5">Endoplasmic reticulum lumen</location>
    </subcellularLocation>
    <subcellularLocation>
        <location evidence="5">Melanosome</location>
    </subcellularLocation>
    <subcellularLocation>
        <location evidence="6">Cytoplasm</location>
    </subcellularLocation>
    <subcellularLocation>
        <location>Cell surface</location>
    </subcellularLocation>
    <text evidence="5">Identified by mass spectrometry in melanosome fractions from stage I to stage IV (By similarity). Localizes to the cell surface in epithelial cells; high levels of free iron promotes cell surface localization (By similarity).</text>
</comment>
<comment type="domain">
    <text evidence="2">The interdomain linker regulates the chaperone activity by mediating the formation of homooligomers. Homooligomers are formed by engagement of the interdomain linker of one HSPA5/BiP molecule as a typical substrate of an adjacent HSPA5/BiP molecule. HSPA5/BiP oligomerization inactivates participating HSPA5/BiP protomers. HSPA5/BiP oligomers probably act as reservoirs to store HSPA5/BiP molecules when they are not needed by the cell. When the levels of unfolded proteins rise, cells can rapidly break up these oligomers to make active monomers.</text>
</comment>
<comment type="PTM">
    <text evidence="2">In unstressed cells, AMPylation at Thr-518 by FICD inactivates the chaperome activity: AMPylated form is locked in a relatively inert state and only weakly stimulated by J domain-containing proteins. In response to endoplasmic reticulum stress, de-AMPylation by the same protein, FICD, restores the chaperone activity.</text>
</comment>
<comment type="similarity">
    <text evidence="9">Belongs to the heat shock protein 70 family.</text>
</comment>
<organism>
    <name type="scientific">Pongo abelii</name>
    <name type="common">Sumatran orangutan</name>
    <name type="synonym">Pongo pygmaeus abelii</name>
    <dbReference type="NCBI Taxonomy" id="9601"/>
    <lineage>
        <taxon>Eukaryota</taxon>
        <taxon>Metazoa</taxon>
        <taxon>Chordata</taxon>
        <taxon>Craniata</taxon>
        <taxon>Vertebrata</taxon>
        <taxon>Euteleostomi</taxon>
        <taxon>Mammalia</taxon>
        <taxon>Eutheria</taxon>
        <taxon>Euarchontoglires</taxon>
        <taxon>Primates</taxon>
        <taxon>Haplorrhini</taxon>
        <taxon>Catarrhini</taxon>
        <taxon>Hominidae</taxon>
        <taxon>Pongo</taxon>
    </lineage>
</organism>
<dbReference type="EC" id="3.6.4.10" evidence="5"/>
<dbReference type="EMBL" id="CR861205">
    <property type="protein sequence ID" value="CAH93276.1"/>
    <property type="molecule type" value="mRNA"/>
</dbReference>
<dbReference type="RefSeq" id="NP_001126927.1">
    <property type="nucleotide sequence ID" value="NM_001133455.1"/>
</dbReference>
<dbReference type="SMR" id="Q5R4P0"/>
<dbReference type="STRING" id="9601.ENSPPYP00000021973"/>
<dbReference type="GeneID" id="100173944"/>
<dbReference type="KEGG" id="pon:100173944"/>
<dbReference type="CTD" id="3309"/>
<dbReference type="eggNOG" id="KOG0100">
    <property type="taxonomic scope" value="Eukaryota"/>
</dbReference>
<dbReference type="InParanoid" id="Q5R4P0"/>
<dbReference type="OrthoDB" id="2401965at2759"/>
<dbReference type="Proteomes" id="UP000001595">
    <property type="component" value="Unplaced"/>
</dbReference>
<dbReference type="GO" id="GO:0009986">
    <property type="term" value="C:cell surface"/>
    <property type="evidence" value="ECO:0007669"/>
    <property type="project" value="UniProtKB-SubCell"/>
</dbReference>
<dbReference type="GO" id="GO:0005737">
    <property type="term" value="C:cytoplasm"/>
    <property type="evidence" value="ECO:0000250"/>
    <property type="project" value="UniProtKB"/>
</dbReference>
<dbReference type="GO" id="GO:0005829">
    <property type="term" value="C:cytosol"/>
    <property type="evidence" value="ECO:0000250"/>
    <property type="project" value="UniProtKB"/>
</dbReference>
<dbReference type="GO" id="GO:0005788">
    <property type="term" value="C:endoplasmic reticulum lumen"/>
    <property type="evidence" value="ECO:0007669"/>
    <property type="project" value="UniProtKB-SubCell"/>
</dbReference>
<dbReference type="GO" id="GO:0043231">
    <property type="term" value="C:intracellular membrane-bounded organelle"/>
    <property type="evidence" value="ECO:0000250"/>
    <property type="project" value="UniProtKB"/>
</dbReference>
<dbReference type="GO" id="GO:0042470">
    <property type="term" value="C:melanosome"/>
    <property type="evidence" value="ECO:0007669"/>
    <property type="project" value="UniProtKB-SubCell"/>
</dbReference>
<dbReference type="GO" id="GO:0005739">
    <property type="term" value="C:mitochondrion"/>
    <property type="evidence" value="ECO:0000250"/>
    <property type="project" value="UniProtKB"/>
</dbReference>
<dbReference type="GO" id="GO:0005524">
    <property type="term" value="F:ATP binding"/>
    <property type="evidence" value="ECO:0007669"/>
    <property type="project" value="UniProtKB-KW"/>
</dbReference>
<dbReference type="GO" id="GO:0016887">
    <property type="term" value="F:ATP hydrolysis activity"/>
    <property type="evidence" value="ECO:0000250"/>
    <property type="project" value="UniProtKB"/>
</dbReference>
<dbReference type="GO" id="GO:0140662">
    <property type="term" value="F:ATP-dependent protein folding chaperone"/>
    <property type="evidence" value="ECO:0007669"/>
    <property type="project" value="InterPro"/>
</dbReference>
<dbReference type="GO" id="GO:0035437">
    <property type="term" value="P:maintenance of protein localization in endoplasmic reticulum"/>
    <property type="evidence" value="ECO:0000250"/>
    <property type="project" value="UniProtKB"/>
</dbReference>
<dbReference type="GO" id="GO:1903895">
    <property type="term" value="P:negative regulation of IRE1-mediated unfolded protein response"/>
    <property type="evidence" value="ECO:0000250"/>
    <property type="project" value="UniProtKB"/>
</dbReference>
<dbReference type="GO" id="GO:0031333">
    <property type="term" value="P:negative regulation of protein-containing complex assembly"/>
    <property type="evidence" value="ECO:0000250"/>
    <property type="project" value="UniProtKB"/>
</dbReference>
<dbReference type="GO" id="GO:0030335">
    <property type="term" value="P:positive regulation of cell migration"/>
    <property type="evidence" value="ECO:0000250"/>
    <property type="project" value="UniProtKB"/>
</dbReference>
<dbReference type="GO" id="GO:0031204">
    <property type="term" value="P:post-translational protein targeting to membrane, translocation"/>
    <property type="evidence" value="ECO:0000250"/>
    <property type="project" value="UniProtKB"/>
</dbReference>
<dbReference type="CDD" id="cd10241">
    <property type="entry name" value="ASKHA_NBD_HSP70_BiP"/>
    <property type="match status" value="1"/>
</dbReference>
<dbReference type="FunFam" id="3.30.420.40:FF:000720">
    <property type="entry name" value="Endoplasmic reticulum chaperone BiP"/>
    <property type="match status" value="1"/>
</dbReference>
<dbReference type="FunFam" id="3.90.640.10:FF:000153">
    <property type="entry name" value="Endoplasmic reticulum chaperone BiP"/>
    <property type="match status" value="1"/>
</dbReference>
<dbReference type="FunFam" id="2.60.34.10:FF:000002">
    <property type="entry name" value="Heat shock 70 kDa"/>
    <property type="match status" value="1"/>
</dbReference>
<dbReference type="FunFam" id="3.30.30.30:FF:000001">
    <property type="entry name" value="heat shock 70 kDa protein-like"/>
    <property type="match status" value="1"/>
</dbReference>
<dbReference type="FunFam" id="1.20.1270.10:FF:000061">
    <property type="entry name" value="Heat shock protein family A (Hsp70) member 5"/>
    <property type="match status" value="1"/>
</dbReference>
<dbReference type="Gene3D" id="1.20.1270.10">
    <property type="match status" value="1"/>
</dbReference>
<dbReference type="Gene3D" id="3.30.420.40">
    <property type="match status" value="2"/>
</dbReference>
<dbReference type="Gene3D" id="3.90.640.10">
    <property type="entry name" value="Actin, Chain A, domain 4"/>
    <property type="match status" value="1"/>
</dbReference>
<dbReference type="Gene3D" id="2.60.34.10">
    <property type="entry name" value="Substrate Binding Domain Of DNAk, Chain A, domain 1"/>
    <property type="match status" value="1"/>
</dbReference>
<dbReference type="InterPro" id="IPR043129">
    <property type="entry name" value="ATPase_NBD"/>
</dbReference>
<dbReference type="InterPro" id="IPR042050">
    <property type="entry name" value="BIP_NBD"/>
</dbReference>
<dbReference type="InterPro" id="IPR018181">
    <property type="entry name" value="Heat_shock_70_CS"/>
</dbReference>
<dbReference type="InterPro" id="IPR029048">
    <property type="entry name" value="HSP70_C_sf"/>
</dbReference>
<dbReference type="InterPro" id="IPR029047">
    <property type="entry name" value="HSP70_peptide-bd_sf"/>
</dbReference>
<dbReference type="InterPro" id="IPR013126">
    <property type="entry name" value="Hsp_70_fam"/>
</dbReference>
<dbReference type="NCBIfam" id="NF001413">
    <property type="entry name" value="PRK00290.1"/>
    <property type="match status" value="1"/>
</dbReference>
<dbReference type="PANTHER" id="PTHR19375">
    <property type="entry name" value="HEAT SHOCK PROTEIN 70KDA"/>
    <property type="match status" value="1"/>
</dbReference>
<dbReference type="Pfam" id="PF00012">
    <property type="entry name" value="HSP70"/>
    <property type="match status" value="1"/>
</dbReference>
<dbReference type="PRINTS" id="PR00301">
    <property type="entry name" value="HEATSHOCK70"/>
</dbReference>
<dbReference type="SUPFAM" id="SSF53067">
    <property type="entry name" value="Actin-like ATPase domain"/>
    <property type="match status" value="2"/>
</dbReference>
<dbReference type="SUPFAM" id="SSF100934">
    <property type="entry name" value="Heat shock protein 70kD (HSP70), C-terminal subdomain"/>
    <property type="match status" value="1"/>
</dbReference>
<dbReference type="SUPFAM" id="SSF100920">
    <property type="entry name" value="Heat shock protein 70kD (HSP70), peptide-binding domain"/>
    <property type="match status" value="1"/>
</dbReference>
<dbReference type="PROSITE" id="PS00014">
    <property type="entry name" value="ER_TARGET"/>
    <property type="match status" value="1"/>
</dbReference>
<dbReference type="PROSITE" id="PS00297">
    <property type="entry name" value="HSP70_1"/>
    <property type="match status" value="1"/>
</dbReference>
<dbReference type="PROSITE" id="PS00329">
    <property type="entry name" value="HSP70_2"/>
    <property type="match status" value="1"/>
</dbReference>
<dbReference type="PROSITE" id="PS01036">
    <property type="entry name" value="HSP70_3"/>
    <property type="match status" value="1"/>
</dbReference>
<protein>
    <recommendedName>
        <fullName evidence="5">Endoplasmic reticulum chaperone BiP</fullName>
        <ecNumber evidence="5">3.6.4.10</ecNumber>
    </recommendedName>
    <alternativeName>
        <fullName evidence="5">78 kDa glucose-regulated protein</fullName>
        <shortName evidence="5">GRP-78</shortName>
    </alternativeName>
    <alternativeName>
        <fullName evidence="5">Binding-immunoglobulin protein</fullName>
        <shortName evidence="5">BiP</shortName>
    </alternativeName>
    <alternativeName>
        <fullName evidence="5">Heat shock protein 70 family protein 5</fullName>
        <shortName evidence="5">HSP70 family protein 5</shortName>
    </alternativeName>
    <alternativeName>
        <fullName evidence="5">Heat shock protein family A member 5</fullName>
    </alternativeName>
    <alternativeName>
        <fullName evidence="5">Immunoglobulin heavy chain-binding protein</fullName>
    </alternativeName>
</protein>
<proteinExistence type="evidence at transcript level"/>
<accession>Q5R4P0</accession>
<reference key="1">
    <citation type="submission" date="2004-11" db="EMBL/GenBank/DDBJ databases">
        <authorList>
            <consortium name="The German cDNA consortium"/>
        </authorList>
    </citation>
    <scope>NUCLEOTIDE SEQUENCE [LARGE SCALE MRNA]</scope>
    <source>
        <tissue>Brain cortex</tissue>
    </source>
</reference>
<name>BIP_PONAB</name>
<feature type="signal peptide" evidence="1">
    <location>
        <begin position="1"/>
        <end position="18"/>
    </location>
</feature>
<feature type="chain" id="PRO_0000290344" description="Endoplasmic reticulum chaperone BiP">
    <location>
        <begin position="19"/>
        <end position="654"/>
    </location>
</feature>
<feature type="region of interest" description="Required for interaction with ELAPOR1" evidence="5">
    <location>
        <begin position="1"/>
        <end position="80"/>
    </location>
</feature>
<feature type="region of interest" description="Nucleotide-binding (NBD)" evidence="5">
    <location>
        <begin position="125"/>
        <end position="280"/>
    </location>
</feature>
<feature type="region of interest" description="Interdomain linker" evidence="2">
    <location>
        <begin position="409"/>
        <end position="419"/>
    </location>
</feature>
<feature type="region of interest" description="Substrate-binding (SBD)" evidence="5">
    <location>
        <begin position="420"/>
        <end position="500"/>
    </location>
</feature>
<feature type="region of interest" description="Disordered" evidence="8">
    <location>
        <begin position="633"/>
        <end position="654"/>
    </location>
</feature>
<feature type="short sequence motif" description="Prevents secretion from ER" evidence="7">
    <location>
        <begin position="651"/>
        <end position="654"/>
    </location>
</feature>
<feature type="compositionally biased region" description="Acidic residues" evidence="8">
    <location>
        <begin position="644"/>
        <end position="654"/>
    </location>
</feature>
<feature type="binding site" evidence="5">
    <location>
        <begin position="36"/>
        <end position="39"/>
    </location>
    <ligand>
        <name>ATP</name>
        <dbReference type="ChEBI" id="CHEBI:30616"/>
    </ligand>
</feature>
<feature type="binding site" evidence="5">
    <location>
        <position position="96"/>
    </location>
    <ligand>
        <name>ATP</name>
        <dbReference type="ChEBI" id="CHEBI:30616"/>
    </ligand>
</feature>
<feature type="binding site" evidence="5">
    <location>
        <begin position="227"/>
        <end position="229"/>
    </location>
    <ligand>
        <name>ATP</name>
        <dbReference type="ChEBI" id="CHEBI:30616"/>
    </ligand>
</feature>
<feature type="binding site" evidence="5">
    <location>
        <begin position="293"/>
        <end position="300"/>
    </location>
    <ligand>
        <name>ATP</name>
        <dbReference type="ChEBI" id="CHEBI:30616"/>
    </ligand>
</feature>
<feature type="binding site" evidence="5">
    <location>
        <begin position="364"/>
        <end position="367"/>
    </location>
    <ligand>
        <name>ATP</name>
        <dbReference type="ChEBI" id="CHEBI:30616"/>
    </ligand>
</feature>
<feature type="modified residue" description="Phosphoserine" evidence="3">
    <location>
        <position position="86"/>
    </location>
</feature>
<feature type="modified residue" description="N6-acetyllysine" evidence="6">
    <location>
        <position position="125"/>
    </location>
</feature>
<feature type="modified residue" description="3'-nitrotyrosine" evidence="6">
    <location>
        <position position="160"/>
    </location>
</feature>
<feature type="modified residue" description="N6-acetyllysine" evidence="6">
    <location>
        <position position="213"/>
    </location>
</feature>
<feature type="modified residue" description="N6-acetyllysine" evidence="4">
    <location>
        <position position="271"/>
    </location>
</feature>
<feature type="modified residue" description="N6-acetyllysine" evidence="6">
    <location>
        <position position="326"/>
    </location>
</feature>
<feature type="modified residue" description="N6-acetyllysine; alternate" evidence="6">
    <location>
        <position position="353"/>
    </location>
</feature>
<feature type="modified residue" description="N6-succinyllysine" evidence="6">
    <location>
        <position position="447"/>
    </location>
</feature>
<feature type="modified residue" description="Omega-N-methylarginine" evidence="4">
    <location>
        <position position="492"/>
    </location>
</feature>
<feature type="modified residue" description="O-AMP-threonine; alternate" evidence="2">
    <location>
        <position position="518"/>
    </location>
</feature>
<feature type="modified residue" description="Phosphothreonine; alternate" evidence="5">
    <location>
        <position position="518"/>
    </location>
</feature>
<feature type="modified residue" description="N6,N6,N6-trimethyllysine; by METTL21A; in vitro" evidence="4">
    <location>
        <position position="585"/>
    </location>
</feature>
<feature type="modified residue" description="N6,N6-dimethyllysine; alternate" evidence="5">
    <location>
        <position position="585"/>
    </location>
</feature>
<feature type="modified residue" description="N6-methyllysine; alternate" evidence="5">
    <location>
        <position position="585"/>
    </location>
</feature>
<feature type="modified residue" description="N6-methyllysine" evidence="5">
    <location>
        <position position="591"/>
    </location>
</feature>
<feature type="modified residue" description="Phosphothreonine" evidence="6">
    <location>
        <position position="643"/>
    </location>
</feature>
<feature type="modified residue" description="Phosphothreonine" evidence="6">
    <location>
        <position position="648"/>
    </location>
</feature>
<feature type="cross-link" description="Glycyl lysine isopeptide (Lys-Gly) (interchain with G-Cter in SUMO2)" evidence="5">
    <location>
        <position position="352"/>
    </location>
</feature>
<feature type="cross-link" description="Glycyl lysine isopeptide (Lys-Gly) (interchain with G-Cter in SUMO1); alternate" evidence="5">
    <location>
        <position position="353"/>
    </location>
</feature>